<feature type="chain" id="PRO_0000205524" description="RNA polymerase sigma-54 factor 1">
    <location>
        <begin position="1"/>
        <end position="484"/>
    </location>
</feature>
<feature type="DNA-binding region" description="H-T-H motif" evidence="1">
    <location>
        <begin position="355"/>
        <end position="374"/>
    </location>
</feature>
<feature type="region of interest" description="Disordered" evidence="2">
    <location>
        <begin position="464"/>
        <end position="484"/>
    </location>
</feature>
<feature type="short sequence motif" description="RPON box">
    <location>
        <begin position="444"/>
        <end position="452"/>
    </location>
</feature>
<feature type="compositionally biased region" description="Polar residues" evidence="2">
    <location>
        <begin position="468"/>
        <end position="477"/>
    </location>
</feature>
<evidence type="ECO:0000255" key="1"/>
<evidence type="ECO:0000256" key="2">
    <source>
        <dbReference type="SAM" id="MobiDB-lite"/>
    </source>
</evidence>
<evidence type="ECO:0000305" key="3"/>
<gene>
    <name type="primary">rpoN1</name>
    <name type="ordered locus">blr1883</name>
</gene>
<comment type="function">
    <text>Sigma factors are initiation factors that promote the attachment of RNA polymerase to specific initiation sites and are then released. This sigma factor is responsible for the expression of the nitrogen fixation genes.</text>
</comment>
<comment type="induction">
    <text>Regulated in response to oxygen.</text>
</comment>
<comment type="similarity">
    <text evidence="3">Belongs to the sigma-54 factor family.</text>
</comment>
<sequence>MALTQRLEFRQSQSLVMSPQLMQAIKLLQLSNLDLMTFVEEELECNPLLERASDDAAGAEAPTEVDQVSGDQLAEAQVRDARDGAMTTYTEWGGGGSGDEDYNLEAFVASETTLSDHLAEQLSVAFTAPAQRMIGQYLIDLVDEAGYLPPDLGQAAERLGATQEDVEHVLAVLQEFDPPGVCARNLRECLAIQLRELDRYDPAMQALVEHLDLLAKRDIASLRKLCGVDDEDIADMIDELRRLSPKPGMKFGSARLQTMVPDVYVRPAPDGGWHVELNSDTLPRVLVNQTYYSKLSKKIGKDVDKSYFNDALQNATWLVRALDQRARTILKVATEIVRQQDGFFTLGVAHLRPLNLKAVAEAIQMHESTVSRVTANKYMATNRGTFELKYFFTASIPSADGGEAHSAEAVRHRIKQLIESEEPSAVLSDDAIVERLRVSGIDIARRTVAKYREAMRIRSSVQRRRDNMWSTMNSRASGGTGLDK</sequence>
<accession>P30332</accession>
<name>RP54_BRADU</name>
<reference key="1">
    <citation type="journal article" date="1991" name="J. Bacteriol.">
        <title>Bradyrhizobium japonicum has two differentially regulated, functional homologs of the sigma 54 gene (rpoN).</title>
        <authorList>
            <person name="Kullik I."/>
            <person name="Fritsche S."/>
            <person name="Knobel H."/>
            <person name="Sanjuan J."/>
            <person name="Hennecke H."/>
            <person name="Fischer H.-M."/>
        </authorList>
    </citation>
    <scope>NUCLEOTIDE SEQUENCE [GENOMIC DNA]</scope>
    <source>
        <strain>USDA 110spc4</strain>
    </source>
</reference>
<reference key="2">
    <citation type="journal article" date="2002" name="DNA Res.">
        <title>Complete genomic sequence of nitrogen-fixing symbiotic bacterium Bradyrhizobium japonicum USDA110.</title>
        <authorList>
            <person name="Kaneko T."/>
            <person name="Nakamura Y."/>
            <person name="Sato S."/>
            <person name="Minamisawa K."/>
            <person name="Uchiumi T."/>
            <person name="Sasamoto S."/>
            <person name="Watanabe A."/>
            <person name="Idesawa K."/>
            <person name="Iriguchi M."/>
            <person name="Kawashima K."/>
            <person name="Kohara M."/>
            <person name="Matsumoto M."/>
            <person name="Shimpo S."/>
            <person name="Tsuruoka H."/>
            <person name="Wada T."/>
            <person name="Yamada M."/>
            <person name="Tabata S."/>
        </authorList>
    </citation>
    <scope>NUCLEOTIDE SEQUENCE [LARGE SCALE GENOMIC DNA]</scope>
    <source>
        <strain>JCM 10833 / BCRC 13528 / IAM 13628 / NBRC 14792 / USDA 110</strain>
    </source>
</reference>
<dbReference type="EMBL" id="M59242">
    <property type="protein sequence ID" value="AAA26240.1"/>
    <property type="molecule type" value="Genomic_DNA"/>
</dbReference>
<dbReference type="EMBL" id="BA000040">
    <property type="protein sequence ID" value="BAC47148.1"/>
    <property type="molecule type" value="Genomic_DNA"/>
</dbReference>
<dbReference type="PIR" id="A38179">
    <property type="entry name" value="A38179"/>
</dbReference>
<dbReference type="RefSeq" id="NP_768523.1">
    <property type="nucleotide sequence ID" value="NC_004463.1"/>
</dbReference>
<dbReference type="SMR" id="P30332"/>
<dbReference type="FunCoup" id="P30332">
    <property type="interactions" value="314"/>
</dbReference>
<dbReference type="STRING" id="224911.AAV28_06335"/>
<dbReference type="EnsemblBacteria" id="BAC47148">
    <property type="protein sequence ID" value="BAC47148"/>
    <property type="gene ID" value="BAC47148"/>
</dbReference>
<dbReference type="KEGG" id="bja:blr1883"/>
<dbReference type="PATRIC" id="fig|224911.44.peg.1362"/>
<dbReference type="eggNOG" id="COG1508">
    <property type="taxonomic scope" value="Bacteria"/>
</dbReference>
<dbReference type="HOGENOM" id="CLU_020569_0_0_5"/>
<dbReference type="InParanoid" id="P30332"/>
<dbReference type="OrthoDB" id="9814402at2"/>
<dbReference type="PhylomeDB" id="P30332"/>
<dbReference type="Proteomes" id="UP000002526">
    <property type="component" value="Chromosome"/>
</dbReference>
<dbReference type="GO" id="GO:0000428">
    <property type="term" value="C:DNA-directed RNA polymerase complex"/>
    <property type="evidence" value="ECO:0007669"/>
    <property type="project" value="UniProtKB-KW"/>
</dbReference>
<dbReference type="GO" id="GO:0032993">
    <property type="term" value="C:protein-DNA complex"/>
    <property type="evidence" value="ECO:0000318"/>
    <property type="project" value="GO_Central"/>
</dbReference>
<dbReference type="GO" id="GO:0001216">
    <property type="term" value="F:DNA-binding transcription activator activity"/>
    <property type="evidence" value="ECO:0000318"/>
    <property type="project" value="GO_Central"/>
</dbReference>
<dbReference type="GO" id="GO:0016779">
    <property type="term" value="F:nucleotidyltransferase activity"/>
    <property type="evidence" value="ECO:0007669"/>
    <property type="project" value="UniProtKB-KW"/>
</dbReference>
<dbReference type="GO" id="GO:0016987">
    <property type="term" value="F:sigma factor activity"/>
    <property type="evidence" value="ECO:0007669"/>
    <property type="project" value="UniProtKB-KW"/>
</dbReference>
<dbReference type="GO" id="GO:0000976">
    <property type="term" value="F:transcription cis-regulatory region binding"/>
    <property type="evidence" value="ECO:0000318"/>
    <property type="project" value="GO_Central"/>
</dbReference>
<dbReference type="GO" id="GO:0006352">
    <property type="term" value="P:DNA-templated transcription initiation"/>
    <property type="evidence" value="ECO:0007669"/>
    <property type="project" value="InterPro"/>
</dbReference>
<dbReference type="GO" id="GO:0009399">
    <property type="term" value="P:nitrogen fixation"/>
    <property type="evidence" value="ECO:0007669"/>
    <property type="project" value="UniProtKB-KW"/>
</dbReference>
<dbReference type="GO" id="GO:0006355">
    <property type="term" value="P:regulation of DNA-templated transcription"/>
    <property type="evidence" value="ECO:0000318"/>
    <property type="project" value="GO_Central"/>
</dbReference>
<dbReference type="Gene3D" id="1.10.10.60">
    <property type="entry name" value="Homeodomain-like"/>
    <property type="match status" value="1"/>
</dbReference>
<dbReference type="Gene3D" id="1.10.10.1330">
    <property type="entry name" value="RNA polymerase sigma-54 factor, core-binding domain"/>
    <property type="match status" value="1"/>
</dbReference>
<dbReference type="InterPro" id="IPR000394">
    <property type="entry name" value="RNA_pol_sigma_54"/>
</dbReference>
<dbReference type="InterPro" id="IPR007046">
    <property type="entry name" value="RNA_pol_sigma_54_core-bd"/>
</dbReference>
<dbReference type="InterPro" id="IPR007634">
    <property type="entry name" value="RNA_pol_sigma_54_DNA-bd"/>
</dbReference>
<dbReference type="InterPro" id="IPR038709">
    <property type="entry name" value="RpoN_core-bd_sf"/>
</dbReference>
<dbReference type="NCBIfam" id="NF004596">
    <property type="entry name" value="PRK05932.1-3"/>
    <property type="match status" value="1"/>
</dbReference>
<dbReference type="NCBIfam" id="NF009118">
    <property type="entry name" value="PRK12469.1"/>
    <property type="match status" value="1"/>
</dbReference>
<dbReference type="NCBIfam" id="TIGR02395">
    <property type="entry name" value="rpoN_sigma"/>
    <property type="match status" value="1"/>
</dbReference>
<dbReference type="PANTHER" id="PTHR32248">
    <property type="entry name" value="RNA POLYMERASE SIGMA-54 FACTOR"/>
    <property type="match status" value="1"/>
</dbReference>
<dbReference type="PANTHER" id="PTHR32248:SF4">
    <property type="entry name" value="RNA POLYMERASE SIGMA-54 FACTOR"/>
    <property type="match status" value="1"/>
</dbReference>
<dbReference type="Pfam" id="PF00309">
    <property type="entry name" value="Sigma54_AID"/>
    <property type="match status" value="1"/>
</dbReference>
<dbReference type="Pfam" id="PF04963">
    <property type="entry name" value="Sigma54_CBD"/>
    <property type="match status" value="1"/>
</dbReference>
<dbReference type="Pfam" id="PF04552">
    <property type="entry name" value="Sigma54_DBD"/>
    <property type="match status" value="1"/>
</dbReference>
<dbReference type="PIRSF" id="PIRSF000774">
    <property type="entry name" value="RpoN"/>
    <property type="match status" value="1"/>
</dbReference>
<dbReference type="PRINTS" id="PR00045">
    <property type="entry name" value="SIGMA54FCT"/>
</dbReference>
<dbReference type="PROSITE" id="PS00717">
    <property type="entry name" value="SIGMA54_1"/>
    <property type="match status" value="1"/>
</dbReference>
<dbReference type="PROSITE" id="PS00718">
    <property type="entry name" value="SIGMA54_2"/>
    <property type="match status" value="1"/>
</dbReference>
<dbReference type="PROSITE" id="PS50044">
    <property type="entry name" value="SIGMA54_3"/>
    <property type="match status" value="1"/>
</dbReference>
<protein>
    <recommendedName>
        <fullName>RNA polymerase sigma-54 factor 1</fullName>
    </recommendedName>
</protein>
<organism>
    <name type="scientific">Bradyrhizobium diazoefficiens (strain JCM 10833 / BCRC 13528 / IAM 13628 / NBRC 14792 / USDA 110)</name>
    <dbReference type="NCBI Taxonomy" id="224911"/>
    <lineage>
        <taxon>Bacteria</taxon>
        <taxon>Pseudomonadati</taxon>
        <taxon>Pseudomonadota</taxon>
        <taxon>Alphaproteobacteria</taxon>
        <taxon>Hyphomicrobiales</taxon>
        <taxon>Nitrobacteraceae</taxon>
        <taxon>Bradyrhizobium</taxon>
    </lineage>
</organism>
<keyword id="KW-0238">DNA-binding</keyword>
<keyword id="KW-0240">DNA-directed RNA polymerase</keyword>
<keyword id="KW-0535">Nitrogen fixation</keyword>
<keyword id="KW-0548">Nucleotidyltransferase</keyword>
<keyword id="KW-1185">Reference proteome</keyword>
<keyword id="KW-0731">Sigma factor</keyword>
<keyword id="KW-0804">Transcription</keyword>
<keyword id="KW-0805">Transcription regulation</keyword>
<keyword id="KW-0808">Transferase</keyword>
<proteinExistence type="evidence at transcript level"/>